<protein>
    <recommendedName>
        <fullName>Trefoil factor 3</fullName>
    </recommendedName>
    <alternativeName>
        <fullName>Intestinal trefoil factor</fullName>
    </alternativeName>
</protein>
<keyword id="KW-0963">Cytoplasm</keyword>
<keyword id="KW-1015">Disulfide bond</keyword>
<keyword id="KW-0272">Extracellular matrix</keyword>
<keyword id="KW-1185">Reference proteome</keyword>
<keyword id="KW-0964">Secreted</keyword>
<keyword id="KW-0732">Signal</keyword>
<proteinExistence type="inferred from homology"/>
<name>TFF3_CANLF</name>
<reference key="1">
    <citation type="submission" date="2003-03" db="EMBL/GenBank/DDBJ databases">
        <title>Canine trefoil factor 3 (TFF3) mRNA from colonic mucosa.</title>
        <authorList>
            <person name="Campbell B.G."/>
            <person name="Jabbes M."/>
        </authorList>
    </citation>
    <scope>NUCLEOTIDE SEQUENCE [MRNA]</scope>
    <source>
        <tissue>Colon mucosa</tissue>
    </source>
</reference>
<accession>Q863B4</accession>
<sequence length="80" mass="8865">MEARVLWLLVVVLVLGSSSLAVAYQGLATNLCEVPPKDRVDCGYPEITSEQCVNRGCCFDSSIHGVPWCFKPLQDTECRF</sequence>
<feature type="signal peptide" evidence="3">
    <location>
        <begin position="1"/>
        <end position="23"/>
    </location>
</feature>
<feature type="chain" id="PRO_0000023464" description="Trefoil factor 3">
    <location>
        <begin position="24"/>
        <end position="80"/>
    </location>
</feature>
<feature type="domain" description="P-type" evidence="4">
    <location>
        <begin position="30"/>
        <end position="73"/>
    </location>
</feature>
<feature type="disulfide bond" evidence="4">
    <location>
        <begin position="32"/>
        <end position="58"/>
    </location>
</feature>
<feature type="disulfide bond" evidence="4">
    <location>
        <begin position="42"/>
        <end position="57"/>
    </location>
</feature>
<feature type="disulfide bond" evidence="4">
    <location>
        <begin position="52"/>
        <end position="69"/>
    </location>
</feature>
<feature type="disulfide bond" description="Interchain" evidence="4">
    <location>
        <position position="78"/>
    </location>
</feature>
<organism>
    <name type="scientific">Canis lupus familiaris</name>
    <name type="common">Dog</name>
    <name type="synonym">Canis familiaris</name>
    <dbReference type="NCBI Taxonomy" id="9615"/>
    <lineage>
        <taxon>Eukaryota</taxon>
        <taxon>Metazoa</taxon>
        <taxon>Chordata</taxon>
        <taxon>Craniata</taxon>
        <taxon>Vertebrata</taxon>
        <taxon>Euteleostomi</taxon>
        <taxon>Mammalia</taxon>
        <taxon>Eutheria</taxon>
        <taxon>Laurasiatheria</taxon>
        <taxon>Carnivora</taxon>
        <taxon>Caniformia</taxon>
        <taxon>Canidae</taxon>
        <taxon>Canis</taxon>
    </lineage>
</organism>
<comment type="function">
    <text evidence="1">Involved in the maintenance and repair of the intestinal mucosa. Promotes the mobility of epithelial cells in healing processes (motogen) (By similarity).</text>
</comment>
<comment type="subunit">
    <text evidence="1">Monomer. Homodimer; disulfide-linked.</text>
</comment>
<comment type="subcellular location">
    <subcellularLocation>
        <location evidence="2">Secreted</location>
        <location evidence="2">Extracellular space</location>
        <location evidence="2">Extracellular matrix</location>
    </subcellularLocation>
    <subcellularLocation>
        <location evidence="2">Cytoplasm</location>
    </subcellularLocation>
</comment>
<evidence type="ECO:0000250" key="1"/>
<evidence type="ECO:0000250" key="2">
    <source>
        <dbReference type="UniProtKB" id="Q07654"/>
    </source>
</evidence>
<evidence type="ECO:0000255" key="3"/>
<evidence type="ECO:0000255" key="4">
    <source>
        <dbReference type="PROSITE-ProRule" id="PRU00779"/>
    </source>
</evidence>
<gene>
    <name type="primary">TFF3</name>
    <name type="synonym">ITF</name>
</gene>
<dbReference type="EMBL" id="AY264844">
    <property type="protein sequence ID" value="AAP21821.1"/>
    <property type="molecule type" value="mRNA"/>
</dbReference>
<dbReference type="RefSeq" id="NP_001002990.1">
    <property type="nucleotide sequence ID" value="NM_001002990.1"/>
</dbReference>
<dbReference type="SMR" id="Q863B4"/>
<dbReference type="FunCoup" id="Q863B4">
    <property type="interactions" value="3"/>
</dbReference>
<dbReference type="PaxDb" id="9612-ENSCAFP00000032737"/>
<dbReference type="Ensembl" id="ENSCAFT00000109373.1">
    <property type="protein sequence ID" value="ENSCAFP00000074539.1"/>
    <property type="gene ID" value="ENSCAFG00000053768.1"/>
</dbReference>
<dbReference type="Ensembl" id="ENSCAFT00030041012.1">
    <property type="protein sequence ID" value="ENSCAFP00030035787.1"/>
    <property type="gene ID" value="ENSCAFG00030022325.1"/>
</dbReference>
<dbReference type="Ensembl" id="ENSCAFT00040045961.1">
    <property type="protein sequence ID" value="ENSCAFP00040040100.1"/>
    <property type="gene ID" value="ENSCAFG00040024680.1"/>
</dbReference>
<dbReference type="Ensembl" id="ENSCAFT00845054078.1">
    <property type="protein sequence ID" value="ENSCAFP00845042482.1"/>
    <property type="gene ID" value="ENSCAFG00845030487.1"/>
</dbReference>
<dbReference type="GeneID" id="403488"/>
<dbReference type="KEGG" id="cfa:403488"/>
<dbReference type="CTD" id="7033"/>
<dbReference type="VEuPathDB" id="HostDB:ENSCAFG00845030487"/>
<dbReference type="eggNOG" id="ENOG502SV7V">
    <property type="taxonomic scope" value="Eukaryota"/>
</dbReference>
<dbReference type="GeneTree" id="ENSGT00940000162416"/>
<dbReference type="InParanoid" id="Q863B4"/>
<dbReference type="OrthoDB" id="10051464at2759"/>
<dbReference type="Proteomes" id="UP000002254">
    <property type="component" value="Chromosome 31"/>
</dbReference>
<dbReference type="Proteomes" id="UP000694429">
    <property type="component" value="Chromosome 31"/>
</dbReference>
<dbReference type="Proteomes" id="UP000694542">
    <property type="component" value="Chromosome 31"/>
</dbReference>
<dbReference type="Proteomes" id="UP000805418">
    <property type="component" value="Chromosome 31"/>
</dbReference>
<dbReference type="GO" id="GO:0005615">
    <property type="term" value="C:extracellular space"/>
    <property type="evidence" value="ECO:0000318"/>
    <property type="project" value="GO_Central"/>
</dbReference>
<dbReference type="GO" id="GO:0030141">
    <property type="term" value="C:secretory granule"/>
    <property type="evidence" value="ECO:0007669"/>
    <property type="project" value="Ensembl"/>
</dbReference>
<dbReference type="GO" id="GO:0042802">
    <property type="term" value="F:identical protein binding"/>
    <property type="evidence" value="ECO:0007669"/>
    <property type="project" value="Ensembl"/>
</dbReference>
<dbReference type="GO" id="GO:0030277">
    <property type="term" value="P:maintenance of gastrointestinal epithelium"/>
    <property type="evidence" value="ECO:0000318"/>
    <property type="project" value="GO_Central"/>
</dbReference>
<dbReference type="GO" id="GO:0010906">
    <property type="term" value="P:regulation of glucose metabolic process"/>
    <property type="evidence" value="ECO:0007669"/>
    <property type="project" value="Ensembl"/>
</dbReference>
<dbReference type="CDD" id="cd00111">
    <property type="entry name" value="Trefoil"/>
    <property type="match status" value="1"/>
</dbReference>
<dbReference type="FunFam" id="4.10.110.10:FF:000001">
    <property type="entry name" value="Trefoil factor 3"/>
    <property type="match status" value="1"/>
</dbReference>
<dbReference type="Gene3D" id="4.10.110.10">
    <property type="entry name" value="Spasmolytic Protein, domain 1"/>
    <property type="match status" value="1"/>
</dbReference>
<dbReference type="InterPro" id="IPR017994">
    <property type="entry name" value="P_trefoil_chordata"/>
</dbReference>
<dbReference type="InterPro" id="IPR017957">
    <property type="entry name" value="P_trefoil_CS"/>
</dbReference>
<dbReference type="InterPro" id="IPR000519">
    <property type="entry name" value="P_trefoil_dom"/>
</dbReference>
<dbReference type="InterPro" id="IPR044913">
    <property type="entry name" value="P_trefoil_dom_sf"/>
</dbReference>
<dbReference type="PANTHER" id="PTHR13826">
    <property type="entry name" value="INTESTINAL TREFOIL FACTOR-RELATED"/>
    <property type="match status" value="1"/>
</dbReference>
<dbReference type="PANTHER" id="PTHR13826:SF16">
    <property type="entry name" value="TREFOIL FACTOR 3"/>
    <property type="match status" value="1"/>
</dbReference>
<dbReference type="Pfam" id="PF00088">
    <property type="entry name" value="Trefoil"/>
    <property type="match status" value="1"/>
</dbReference>
<dbReference type="PRINTS" id="PR00680">
    <property type="entry name" value="PTREFOIL"/>
</dbReference>
<dbReference type="SMART" id="SM00018">
    <property type="entry name" value="PD"/>
    <property type="match status" value="1"/>
</dbReference>
<dbReference type="SUPFAM" id="SSF57492">
    <property type="entry name" value="Trefoil"/>
    <property type="match status" value="1"/>
</dbReference>
<dbReference type="PROSITE" id="PS00025">
    <property type="entry name" value="P_TREFOIL_1"/>
    <property type="match status" value="1"/>
</dbReference>
<dbReference type="PROSITE" id="PS51448">
    <property type="entry name" value="P_TREFOIL_2"/>
    <property type="match status" value="1"/>
</dbReference>